<protein>
    <recommendedName>
        <fullName evidence="1">Alpha-1,4-glucan:maltose-1-phosphate maltosyltransferase</fullName>
        <shortName evidence="1">GMPMT</shortName>
        <ecNumber evidence="1">2.4.99.16</ecNumber>
    </recommendedName>
    <alternativeName>
        <fullName evidence="1">(1-&gt;4)-alpha-D-glucan:maltose-1-phosphate alpha-D-maltosyltransferase</fullName>
    </alternativeName>
</protein>
<name>GLGE_SALRD</name>
<comment type="function">
    <text evidence="1">Maltosyltransferase that uses maltose 1-phosphate (M1P) as the sugar donor to elongate linear or branched alpha-(1-&gt;4)-glucans. Is involved in a branched alpha-glucan biosynthetic pathway from trehalose, together with TreS, Mak and GlgB.</text>
</comment>
<comment type="catalytic activity">
    <reaction evidence="1">
        <text>alpha-maltose 1-phosphate + [(1-&gt;4)-alpha-D-glucosyl](n) = [(1-&gt;4)-alpha-D-glucosyl](n+2) + phosphate</text>
        <dbReference type="Rhea" id="RHEA:42692"/>
        <dbReference type="Rhea" id="RHEA-COMP:9584"/>
        <dbReference type="Rhea" id="RHEA-COMP:10183"/>
        <dbReference type="ChEBI" id="CHEBI:15444"/>
        <dbReference type="ChEBI" id="CHEBI:43474"/>
        <dbReference type="ChEBI" id="CHEBI:63576"/>
        <dbReference type="EC" id="2.4.99.16"/>
    </reaction>
</comment>
<comment type="subunit">
    <text evidence="1">Homodimer.</text>
</comment>
<comment type="similarity">
    <text evidence="1">Belongs to the glycosyl hydrolase 13 family. GlgE subfamily.</text>
</comment>
<dbReference type="EC" id="2.4.99.16" evidence="1"/>
<dbReference type="EMBL" id="CP000159">
    <property type="protein sequence ID" value="ABC46101.1"/>
    <property type="molecule type" value="Genomic_DNA"/>
</dbReference>
<dbReference type="RefSeq" id="WP_011403612.1">
    <property type="nucleotide sequence ID" value="NC_007677.1"/>
</dbReference>
<dbReference type="RefSeq" id="YP_444983.1">
    <property type="nucleotide sequence ID" value="NC_007677.1"/>
</dbReference>
<dbReference type="SMR" id="Q2S498"/>
<dbReference type="STRING" id="309807.SRU_0848"/>
<dbReference type="CAZy" id="GH13">
    <property type="family name" value="Glycoside Hydrolase Family 13"/>
</dbReference>
<dbReference type="EnsemblBacteria" id="ABC46101">
    <property type="protein sequence ID" value="ABC46101"/>
    <property type="gene ID" value="SRU_0848"/>
</dbReference>
<dbReference type="KEGG" id="sru:SRU_0848"/>
<dbReference type="PATRIC" id="fig|309807.25.peg.874"/>
<dbReference type="eggNOG" id="COG0366">
    <property type="taxonomic scope" value="Bacteria"/>
</dbReference>
<dbReference type="HOGENOM" id="CLU_015798_0_0_10"/>
<dbReference type="OrthoDB" id="9805159at2"/>
<dbReference type="Proteomes" id="UP000008674">
    <property type="component" value="Chromosome"/>
</dbReference>
<dbReference type="GO" id="GO:0016758">
    <property type="term" value="F:hexosyltransferase activity"/>
    <property type="evidence" value="ECO:0007669"/>
    <property type="project" value="UniProtKB-UniRule"/>
</dbReference>
<dbReference type="GO" id="GO:0004553">
    <property type="term" value="F:hydrolase activity, hydrolyzing O-glycosyl compounds"/>
    <property type="evidence" value="ECO:0007669"/>
    <property type="project" value="InterPro"/>
</dbReference>
<dbReference type="GO" id="GO:0030979">
    <property type="term" value="P:alpha-glucan biosynthetic process"/>
    <property type="evidence" value="ECO:0007669"/>
    <property type="project" value="UniProtKB-UniRule"/>
</dbReference>
<dbReference type="CDD" id="cd11344">
    <property type="entry name" value="AmyAc_GlgE_like"/>
    <property type="match status" value="1"/>
</dbReference>
<dbReference type="Gene3D" id="3.20.20.80">
    <property type="entry name" value="Glycosidases"/>
    <property type="match status" value="1"/>
</dbReference>
<dbReference type="Gene3D" id="2.60.40.1180">
    <property type="entry name" value="Golgi alpha-mannosidase II"/>
    <property type="match status" value="1"/>
</dbReference>
<dbReference type="Gene3D" id="2.60.40.10">
    <property type="entry name" value="Immunoglobulins"/>
    <property type="match status" value="1"/>
</dbReference>
<dbReference type="Gene3D" id="1.20.58.80">
    <property type="entry name" value="Phosphotransferase system, lactose/cellobiose-type IIA subunit"/>
    <property type="match status" value="1"/>
</dbReference>
<dbReference type="HAMAP" id="MF_02124">
    <property type="entry name" value="GlgE"/>
    <property type="match status" value="1"/>
</dbReference>
<dbReference type="InterPro" id="IPR026585">
    <property type="entry name" value="GlgE"/>
</dbReference>
<dbReference type="InterPro" id="IPR049171">
    <property type="entry name" value="GLGE_C"/>
</dbReference>
<dbReference type="InterPro" id="IPR021828">
    <property type="entry name" value="GlgE_dom_N/S"/>
</dbReference>
<dbReference type="InterPro" id="IPR006047">
    <property type="entry name" value="Glyco_hydro_13_cat_dom"/>
</dbReference>
<dbReference type="InterPro" id="IPR013780">
    <property type="entry name" value="Glyco_hydro_b"/>
</dbReference>
<dbReference type="InterPro" id="IPR017853">
    <property type="entry name" value="Glycoside_hydrolase_SF"/>
</dbReference>
<dbReference type="InterPro" id="IPR013783">
    <property type="entry name" value="Ig-like_fold"/>
</dbReference>
<dbReference type="PANTHER" id="PTHR47786">
    <property type="entry name" value="ALPHA-1,4-GLUCAN:MALTOSE-1-PHOSPHATE MALTOSYLTRANSFERASE"/>
    <property type="match status" value="1"/>
</dbReference>
<dbReference type="PANTHER" id="PTHR47786:SF2">
    <property type="entry name" value="GLYCOSYL HYDROLASE FAMILY 13 CATALYTIC DOMAIN-CONTAINING PROTEIN"/>
    <property type="match status" value="1"/>
</dbReference>
<dbReference type="Pfam" id="PF00128">
    <property type="entry name" value="Alpha-amylase"/>
    <property type="match status" value="1"/>
</dbReference>
<dbReference type="Pfam" id="PF21702">
    <property type="entry name" value="GLGE_C"/>
    <property type="match status" value="1"/>
</dbReference>
<dbReference type="Pfam" id="PF11896">
    <property type="entry name" value="GlgE_dom_N_S"/>
    <property type="match status" value="1"/>
</dbReference>
<dbReference type="SMART" id="SM00642">
    <property type="entry name" value="Aamy"/>
    <property type="match status" value="1"/>
</dbReference>
<dbReference type="SUPFAM" id="SSF51445">
    <property type="entry name" value="(Trans)glycosidases"/>
    <property type="match status" value="1"/>
</dbReference>
<keyword id="KW-0119">Carbohydrate metabolism</keyword>
<keyword id="KW-0328">Glycosyltransferase</keyword>
<keyword id="KW-1185">Reference proteome</keyword>
<keyword id="KW-0808">Transferase</keyword>
<feature type="chain" id="PRO_0000413903" description="Alpha-1,4-glucan:maltose-1-phosphate maltosyltransferase">
    <location>
        <begin position="1"/>
        <end position="663"/>
    </location>
</feature>
<feature type="region of interest" description="Disordered" evidence="2">
    <location>
        <begin position="238"/>
        <end position="266"/>
    </location>
</feature>
<feature type="active site" description="Nucleophile" evidence="1">
    <location>
        <position position="380"/>
    </location>
</feature>
<feature type="active site" description="Proton donor" evidence="1">
    <location>
        <position position="409"/>
    </location>
</feature>
<feature type="binding site" evidence="1">
    <location>
        <position position="244"/>
    </location>
    <ligand>
        <name>alpha-maltose 1-phosphate</name>
        <dbReference type="ChEBI" id="CHEBI:63576"/>
    </ligand>
</feature>
<feature type="binding site" evidence="1">
    <location>
        <position position="309"/>
    </location>
    <ligand>
        <name>alpha-maltose 1-phosphate</name>
        <dbReference type="ChEBI" id="CHEBI:63576"/>
    </ligand>
</feature>
<feature type="binding site" evidence="1">
    <location>
        <position position="344"/>
    </location>
    <ligand>
        <name>alpha-maltose 1-phosphate</name>
        <dbReference type="ChEBI" id="CHEBI:63576"/>
    </ligand>
</feature>
<feature type="binding site" evidence="1">
    <location>
        <position position="381"/>
    </location>
    <ligand>
        <name>alpha-maltose 1-phosphate</name>
        <dbReference type="ChEBI" id="CHEBI:63576"/>
    </ligand>
</feature>
<feature type="binding site" evidence="1">
    <location>
        <begin position="521"/>
        <end position="522"/>
    </location>
    <ligand>
        <name>alpha-maltose 1-phosphate</name>
        <dbReference type="ChEBI" id="CHEBI:63576"/>
    </ligand>
</feature>
<feature type="site" description="Transition state stabilizer" evidence="1">
    <location>
        <position position="467"/>
    </location>
</feature>
<accession>Q2S498</accession>
<reference key="1">
    <citation type="journal article" date="2005" name="Proc. Natl. Acad. Sci. U.S.A.">
        <title>The genome of Salinibacter ruber: convergence and gene exchange among hyperhalophilic bacteria and archaea.</title>
        <authorList>
            <person name="Mongodin E.F."/>
            <person name="Nelson K.E."/>
            <person name="Daugherty S."/>
            <person name="DeBoy R.T."/>
            <person name="Wister J."/>
            <person name="Khouri H."/>
            <person name="Weidman J."/>
            <person name="Walsh D.A."/>
            <person name="Papke R.T."/>
            <person name="Sanchez Perez G."/>
            <person name="Sharma A.K."/>
            <person name="Nesbo C.L."/>
            <person name="MacLeod D."/>
            <person name="Bapteste E."/>
            <person name="Doolittle W.F."/>
            <person name="Charlebois R.L."/>
            <person name="Legault B."/>
            <person name="Rodriguez-Valera F."/>
        </authorList>
    </citation>
    <scope>NUCLEOTIDE SEQUENCE [LARGE SCALE GENOMIC DNA]</scope>
    <source>
        <strain>DSM 13855 / CECT 5946 / M31</strain>
    </source>
</reference>
<gene>
    <name evidence="1" type="primary">glgE</name>
    <name type="ordered locus">SRU_0848</name>
</gene>
<organism>
    <name type="scientific">Salinibacter ruber (strain DSM 13855 / M31)</name>
    <dbReference type="NCBI Taxonomy" id="309807"/>
    <lineage>
        <taxon>Bacteria</taxon>
        <taxon>Pseudomonadati</taxon>
        <taxon>Rhodothermota</taxon>
        <taxon>Rhodothermia</taxon>
        <taxon>Rhodothermales</taxon>
        <taxon>Salinibacteraceae</taxon>
        <taxon>Salinibacter</taxon>
    </lineage>
</organism>
<proteinExistence type="inferred from homology"/>
<evidence type="ECO:0000255" key="1">
    <source>
        <dbReference type="HAMAP-Rule" id="MF_02124"/>
    </source>
</evidence>
<evidence type="ECO:0000256" key="2">
    <source>
        <dbReference type="SAM" id="MobiDB-lite"/>
    </source>
</evidence>
<sequence>MPKSWSRVVISSVAPAIDGGQWPIKRAVGEQVEVTAGVLVDSHDALAVELVVRHASEETEHVTRMPHVENDEYAGAFEVSAPGRYLYRVRAWINRFATWQDQFRRRVEGGEPPSEIESELTAGASLLDEAAEHAPEDDREMLTAHIEAFENGNAEAALGDEIAELARRHAPHHQQTSSATYEVFVDPERARTGAWYEFFPRSVRDDDEHATLDEAAERLPRIQEMGFDIVYLPPIHPIGETNRKGPDDAPEAGPDDPGSPWAIGGFLADGSKGGHKSVHPKLGGIEAFDRFVETAHDLGLEVALDVAFQCSPDHPYVEEHPEWFYHRPDGSLRYAENPPKKYKDVHPINFETEAWPALWAELKSVFEYWIDHGVTTFRVDNPHTKPFAFWQWCLRELREDTPELVVLSEAFTRPKTMYHLAKLGFNNSYTYFTWRNTPDALEAYGEELFHTEAAEYFRPNFWPNTPDILHDELVDGGRPAHKSRFVLAATMSSTYGVYGPPFEHVDTQQRDHKEEYARNEKYEIRTWDWNDPTSLQPFMARVNRLRNENPALQQTRSIRFLDTQHPDLIAYSKAAGDNLIVVVVSLDPHSECEGQLVLPIHDLGLPADEAFSAHDLLHDAHYTWQGTHHYLRLSPDRPAHIFRLEPAGTSEQTHAAYDRLVHA</sequence>